<keyword id="KW-0012">Acyltransferase</keyword>
<keyword id="KW-0324">Glycolysis</keyword>
<keyword id="KW-0450">Lipoyl</keyword>
<keyword id="KW-0808">Transferase</keyword>
<proteinExistence type="inferred from homology"/>
<protein>
    <recommendedName>
        <fullName>Lipoamide acyltransferase component of branched-chain alpha-keto acid dehydrogenase complex</fullName>
        <ecNumber>2.3.1.168</ecNumber>
    </recommendedName>
    <alternativeName>
        <fullName>Branched-chain alpha-keto acid dehydrogenase complex component E2</fullName>
        <shortName>BCKAD-E2</shortName>
        <shortName>BCKADE2</shortName>
    </alternativeName>
    <alternativeName>
        <fullName>Dihydrolipoamide acetyltransferase component of branched-chain alpha-keto acid dehydrogenase complex</fullName>
    </alternativeName>
    <alternativeName>
        <fullName>Dihydrolipoamide branched chain transacylase</fullName>
    </alternativeName>
    <alternativeName>
        <fullName>Dihydrolipoyllysine-residue (2-methylpropanoyl)transferase</fullName>
    </alternativeName>
</protein>
<accession>P09062</accession>
<name>ODB2_PSEPU</name>
<organism>
    <name type="scientific">Pseudomonas putida</name>
    <name type="common">Arthrobacter siderocapsulatus</name>
    <dbReference type="NCBI Taxonomy" id="303"/>
    <lineage>
        <taxon>Bacteria</taxon>
        <taxon>Pseudomonadati</taxon>
        <taxon>Pseudomonadota</taxon>
        <taxon>Gammaproteobacteria</taxon>
        <taxon>Pseudomonadales</taxon>
        <taxon>Pseudomonadaceae</taxon>
        <taxon>Pseudomonas</taxon>
    </lineage>
</organism>
<dbReference type="EC" id="2.3.1.168"/>
<dbReference type="EMBL" id="M57613">
    <property type="protein sequence ID" value="AAA65617.1"/>
    <property type="molecule type" value="Genomic_DNA"/>
</dbReference>
<dbReference type="PIR" id="S01322">
    <property type="entry name" value="XXPS2M"/>
</dbReference>
<dbReference type="RefSeq" id="WP_016711829.1">
    <property type="nucleotide sequence ID" value="NZ_AP022324.1"/>
</dbReference>
<dbReference type="SMR" id="P09062"/>
<dbReference type="OrthoDB" id="9805770at2"/>
<dbReference type="GO" id="GO:0005737">
    <property type="term" value="C:cytoplasm"/>
    <property type="evidence" value="ECO:0007669"/>
    <property type="project" value="TreeGrafter"/>
</dbReference>
<dbReference type="GO" id="GO:0016407">
    <property type="term" value="F:acetyltransferase activity"/>
    <property type="evidence" value="ECO:0007669"/>
    <property type="project" value="TreeGrafter"/>
</dbReference>
<dbReference type="GO" id="GO:0043754">
    <property type="term" value="F:dihydrolipoyllysine-residue (2-methylpropanoyl)transferase activity"/>
    <property type="evidence" value="ECO:0007669"/>
    <property type="project" value="UniProtKB-EC"/>
</dbReference>
<dbReference type="GO" id="GO:0031405">
    <property type="term" value="F:lipoic acid binding"/>
    <property type="evidence" value="ECO:0007669"/>
    <property type="project" value="TreeGrafter"/>
</dbReference>
<dbReference type="GO" id="GO:0006096">
    <property type="term" value="P:glycolytic process"/>
    <property type="evidence" value="ECO:0007669"/>
    <property type="project" value="UniProtKB-KW"/>
</dbReference>
<dbReference type="CDD" id="cd06849">
    <property type="entry name" value="lipoyl_domain"/>
    <property type="match status" value="1"/>
</dbReference>
<dbReference type="FunFam" id="3.30.559.10:FF:000007">
    <property type="entry name" value="Dihydrolipoamide acetyltransferase component of pyruvate dehydrogenase complex"/>
    <property type="match status" value="1"/>
</dbReference>
<dbReference type="Gene3D" id="2.40.50.100">
    <property type="match status" value="1"/>
</dbReference>
<dbReference type="Gene3D" id="3.30.559.10">
    <property type="entry name" value="Chloramphenicol acetyltransferase-like domain"/>
    <property type="match status" value="1"/>
</dbReference>
<dbReference type="Gene3D" id="4.10.320.10">
    <property type="entry name" value="E3-binding domain"/>
    <property type="match status" value="1"/>
</dbReference>
<dbReference type="InterPro" id="IPR003016">
    <property type="entry name" value="2-oxoA_DH_lipoyl-BS"/>
</dbReference>
<dbReference type="InterPro" id="IPR001078">
    <property type="entry name" value="2-oxoacid_DH_actylTfrase"/>
</dbReference>
<dbReference type="InterPro" id="IPR050743">
    <property type="entry name" value="2-oxoacid_DH_E2_comp"/>
</dbReference>
<dbReference type="InterPro" id="IPR000089">
    <property type="entry name" value="Biotin_lipoyl"/>
</dbReference>
<dbReference type="InterPro" id="IPR023213">
    <property type="entry name" value="CAT-like_dom_sf"/>
</dbReference>
<dbReference type="InterPro" id="IPR036625">
    <property type="entry name" value="E3-bd_dom_sf"/>
</dbReference>
<dbReference type="InterPro" id="IPR004167">
    <property type="entry name" value="PSBD"/>
</dbReference>
<dbReference type="InterPro" id="IPR011053">
    <property type="entry name" value="Single_hybrid_motif"/>
</dbReference>
<dbReference type="PANTHER" id="PTHR43178">
    <property type="entry name" value="DIHYDROLIPOAMIDE ACETYLTRANSFERASE COMPONENT OF PYRUVATE DEHYDROGENASE COMPLEX"/>
    <property type="match status" value="1"/>
</dbReference>
<dbReference type="PANTHER" id="PTHR43178:SF5">
    <property type="entry name" value="LIPOAMIDE ACYLTRANSFERASE COMPONENT OF BRANCHED-CHAIN ALPHA-KETO ACID DEHYDROGENASE COMPLEX, MITOCHONDRIAL"/>
    <property type="match status" value="1"/>
</dbReference>
<dbReference type="Pfam" id="PF00198">
    <property type="entry name" value="2-oxoacid_dh"/>
    <property type="match status" value="1"/>
</dbReference>
<dbReference type="Pfam" id="PF00364">
    <property type="entry name" value="Biotin_lipoyl"/>
    <property type="match status" value="1"/>
</dbReference>
<dbReference type="Pfam" id="PF02817">
    <property type="entry name" value="E3_binding"/>
    <property type="match status" value="1"/>
</dbReference>
<dbReference type="SUPFAM" id="SSF52777">
    <property type="entry name" value="CoA-dependent acyltransferases"/>
    <property type="match status" value="1"/>
</dbReference>
<dbReference type="SUPFAM" id="SSF47005">
    <property type="entry name" value="Peripheral subunit-binding domain of 2-oxo acid dehydrogenase complex"/>
    <property type="match status" value="1"/>
</dbReference>
<dbReference type="SUPFAM" id="SSF51230">
    <property type="entry name" value="Single hybrid motif"/>
    <property type="match status" value="1"/>
</dbReference>
<dbReference type="PROSITE" id="PS50968">
    <property type="entry name" value="BIOTINYL_LIPOYL"/>
    <property type="match status" value="1"/>
</dbReference>
<dbReference type="PROSITE" id="PS00189">
    <property type="entry name" value="LIPOYL"/>
    <property type="match status" value="1"/>
</dbReference>
<dbReference type="PROSITE" id="PS51826">
    <property type="entry name" value="PSBD"/>
    <property type="match status" value="1"/>
</dbReference>
<gene>
    <name type="primary">bkdB</name>
</gene>
<evidence type="ECO:0000250" key="1"/>
<evidence type="ECO:0000255" key="2"/>
<evidence type="ECO:0000255" key="3">
    <source>
        <dbReference type="PROSITE-ProRule" id="PRU01066"/>
    </source>
</evidence>
<evidence type="ECO:0000255" key="4">
    <source>
        <dbReference type="PROSITE-ProRule" id="PRU01170"/>
    </source>
</evidence>
<evidence type="ECO:0000305" key="5"/>
<feature type="initiator methionine" description="Removed" evidence="1">
    <location>
        <position position="1"/>
    </location>
</feature>
<feature type="chain" id="PRO_0000162303" description="Lipoamide acyltransferase component of branched-chain alpha-keto acid dehydrogenase complex">
    <location>
        <begin position="2"/>
        <end position="423"/>
    </location>
</feature>
<feature type="domain" description="Lipoyl-binding" evidence="3">
    <location>
        <begin position="3"/>
        <end position="78"/>
    </location>
</feature>
<feature type="domain" description="Peripheral subunit-binding (PSBD)" evidence="4">
    <location>
        <begin position="137"/>
        <end position="174"/>
    </location>
</feature>
<feature type="active site" evidence="2">
    <location>
        <position position="395"/>
    </location>
</feature>
<feature type="active site" evidence="2">
    <location>
        <position position="399"/>
    </location>
</feature>
<feature type="modified residue" description="N6-lipoyllysine" evidence="3">
    <location>
        <position position="44"/>
    </location>
</feature>
<sequence>MGTHVIKMPDIGEGIAQVELVEWFVKVGDIIAEDQVVADVMTDKATVEIPSPVSGKVLALGGQPGEVMAVGSELIRIEVEGSGNHVDVPQAKPAEVPAAPVAAKPEPQKDVKPAAYQASASHEAAPIVPRQPGDKPLASPAVRKRALDAGIELRYVHGSGPAGRILHEDLDAFMSKPQSAAGQTPNGYARRTDSEQVPVIGLRRKIAQRMQDAKRRVAHFSYVEEIDVTALEALRQQLNSKHGDSRGKLTLLPFLVRALVVALRDFPQINATYDDEAQIITRHGAVHVGIATQGDNGLMVPVLRHAEAGSLWANAGEISRLANAARNNKASREELSGSTITLTSLGALGGIVSTPVVNTPEVAIVGVNRMVERPVVIDGQIVVRKMMNLSSSFDHRVVDGMDAALFIQAVRGLLEQPACLFVE</sequence>
<comment type="function">
    <text>The branched-chain alpha-keto dehydrogenase complex catalyzes the overall conversion of alpha-keto acids to acyl-CoA and CO(2). It contains multiple copies of three enzymatic components: branched-chain alpha-keto acid decarboxylase (E1), lipoamide acyltransferase (E2) and lipoamide dehydrogenase (E3).</text>
</comment>
<comment type="catalytic activity">
    <reaction>
        <text>N(6)-[(R)-dihydrolipoyl]-L-lysyl-[protein] + 2-methylpropanoyl-CoA = N(6)-[(R)-S(8)-2-methylpropanoyldihydrolipoyl]-L-lysyl-[protein] + CoA</text>
        <dbReference type="Rhea" id="RHEA:18865"/>
        <dbReference type="Rhea" id="RHEA-COMP:10475"/>
        <dbReference type="Rhea" id="RHEA-COMP:10497"/>
        <dbReference type="ChEBI" id="CHEBI:57287"/>
        <dbReference type="ChEBI" id="CHEBI:57338"/>
        <dbReference type="ChEBI" id="CHEBI:83100"/>
        <dbReference type="ChEBI" id="CHEBI:83142"/>
        <dbReference type="EC" id="2.3.1.168"/>
    </reaction>
</comment>
<comment type="cofactor">
    <cofactor evidence="1">
        <name>(R)-lipoate</name>
        <dbReference type="ChEBI" id="CHEBI:83088"/>
    </cofactor>
    <text evidence="1">Binds 1 lipoyl cofactor covalently.</text>
</comment>
<comment type="subunit">
    <text>Forms a 24-polypeptide structural core with octahedral symmetry.</text>
</comment>
<comment type="similarity">
    <text evidence="5">Belongs to the 2-oxoacid dehydrogenase family.</text>
</comment>
<reference key="1">
    <citation type="journal article" date="1988" name="Eur. J. Biochem.">
        <title>Comparison of the amino acid sequences of the transacylase components of branched chain oxoacid dehydrogenase of Pseudomonas putida, and the pyruvate and 2-oxoglutarate dehydrogenases of Escherichia coli.</title>
        <authorList>
            <person name="Burns G."/>
            <person name="Brown T."/>
            <person name="Hatter K."/>
            <person name="Sokatch J.R."/>
        </authorList>
    </citation>
    <scope>NUCLEOTIDE SEQUENCE [GENOMIC DNA]</scope>
    <source>
        <strain>G2</strain>
    </source>
</reference>